<name>YNFB_ECOLC</name>
<proteinExistence type="inferred from homology"/>
<gene>
    <name evidence="1" type="primary">ynfB</name>
    <name type="ordered locus">EcolC_2047</name>
</gene>
<organism>
    <name type="scientific">Escherichia coli (strain ATCC 8739 / DSM 1576 / NBRC 3972 / NCIMB 8545 / WDCM 00012 / Crooks)</name>
    <dbReference type="NCBI Taxonomy" id="481805"/>
    <lineage>
        <taxon>Bacteria</taxon>
        <taxon>Pseudomonadati</taxon>
        <taxon>Pseudomonadota</taxon>
        <taxon>Gammaproteobacteria</taxon>
        <taxon>Enterobacterales</taxon>
        <taxon>Enterobacteriaceae</taxon>
        <taxon>Escherichia</taxon>
    </lineage>
</organism>
<dbReference type="EMBL" id="CP000946">
    <property type="protein sequence ID" value="ACA77691.1"/>
    <property type="molecule type" value="Genomic_DNA"/>
</dbReference>
<dbReference type="RefSeq" id="WP_000705211.1">
    <property type="nucleotide sequence ID" value="NZ_MTFT01000006.1"/>
</dbReference>
<dbReference type="KEGG" id="ecl:EcolC_2047"/>
<dbReference type="HOGENOM" id="CLU_167574_0_0_6"/>
<dbReference type="HAMAP" id="MF_01581">
    <property type="entry name" value="UPF0482"/>
    <property type="match status" value="1"/>
</dbReference>
<dbReference type="InterPro" id="IPR009700">
    <property type="entry name" value="DUF1283"/>
</dbReference>
<dbReference type="NCBIfam" id="NF010180">
    <property type="entry name" value="PRK13659.1"/>
    <property type="match status" value="1"/>
</dbReference>
<dbReference type="Pfam" id="PF06932">
    <property type="entry name" value="DUF1283"/>
    <property type="match status" value="1"/>
</dbReference>
<feature type="signal peptide" evidence="1">
    <location>
        <begin position="1"/>
        <end position="28"/>
    </location>
</feature>
<feature type="chain" id="PRO_5000313806" description="UPF0482 protein YnfB">
    <location>
        <begin position="29"/>
        <end position="113"/>
    </location>
</feature>
<accession>B1IR07</accession>
<reference key="1">
    <citation type="submission" date="2008-02" db="EMBL/GenBank/DDBJ databases">
        <title>Complete sequence of Escherichia coli C str. ATCC 8739.</title>
        <authorList>
            <person name="Copeland A."/>
            <person name="Lucas S."/>
            <person name="Lapidus A."/>
            <person name="Glavina del Rio T."/>
            <person name="Dalin E."/>
            <person name="Tice H."/>
            <person name="Bruce D."/>
            <person name="Goodwin L."/>
            <person name="Pitluck S."/>
            <person name="Kiss H."/>
            <person name="Brettin T."/>
            <person name="Detter J.C."/>
            <person name="Han C."/>
            <person name="Kuske C.R."/>
            <person name="Schmutz J."/>
            <person name="Larimer F."/>
            <person name="Land M."/>
            <person name="Hauser L."/>
            <person name="Kyrpides N."/>
            <person name="Mikhailova N."/>
            <person name="Ingram L."/>
            <person name="Richardson P."/>
        </authorList>
    </citation>
    <scope>NUCLEOTIDE SEQUENCE [LARGE SCALE GENOMIC DNA]</scope>
    <source>
        <strain>ATCC 8739 / DSM 1576 / NBRC 3972 / NCIMB 8545 / WDCM 00012 / Crooks</strain>
    </source>
</reference>
<evidence type="ECO:0000255" key="1">
    <source>
        <dbReference type="HAMAP-Rule" id="MF_01581"/>
    </source>
</evidence>
<keyword id="KW-0732">Signal</keyword>
<protein>
    <recommendedName>
        <fullName evidence="1">UPF0482 protein YnfB</fullName>
    </recommendedName>
</protein>
<sequence>MKITLSKRIGLLAILLPCALALSTTVHAETNKLVIESGDSAQSRQHAAMEKEQWNDTRNLRQKVNKRTEKEWDKADAAFDNRDKCEQSANINAYWEPNTLRCLDRRTGRVITP</sequence>
<comment type="similarity">
    <text evidence="1">Belongs to the UPF0482 family.</text>
</comment>